<keyword id="KW-0963">Cytoplasm</keyword>
<keyword id="KW-0269">Exonuclease</keyword>
<keyword id="KW-0378">Hydrolase</keyword>
<keyword id="KW-0540">Nuclease</keyword>
<comment type="function">
    <text evidence="1">Bidirectionally degrades single-stranded DNA into large acid-insoluble oligonucleotides, which are then degraded further into small acid-soluble oligonucleotides.</text>
</comment>
<comment type="catalytic activity">
    <reaction evidence="1">
        <text>Exonucleolytic cleavage in either 5'- to 3'- or 3'- to 5'-direction to yield nucleoside 5'-phosphates.</text>
        <dbReference type="EC" id="3.1.11.6"/>
    </reaction>
</comment>
<comment type="subunit">
    <text evidence="1">Heterooligomer composed of large and small subunits.</text>
</comment>
<comment type="subcellular location">
    <subcellularLocation>
        <location evidence="1">Cytoplasm</location>
    </subcellularLocation>
</comment>
<comment type="similarity">
    <text evidence="1">Belongs to the XseB family.</text>
</comment>
<accession>C3PN64</accession>
<evidence type="ECO:0000255" key="1">
    <source>
        <dbReference type="HAMAP-Rule" id="MF_00337"/>
    </source>
</evidence>
<organism>
    <name type="scientific">Rickettsia africae (strain ESF-5)</name>
    <dbReference type="NCBI Taxonomy" id="347255"/>
    <lineage>
        <taxon>Bacteria</taxon>
        <taxon>Pseudomonadati</taxon>
        <taxon>Pseudomonadota</taxon>
        <taxon>Alphaproteobacteria</taxon>
        <taxon>Rickettsiales</taxon>
        <taxon>Rickettsiaceae</taxon>
        <taxon>Rickettsieae</taxon>
        <taxon>Rickettsia</taxon>
        <taxon>spotted fever group</taxon>
    </lineage>
</organism>
<protein>
    <recommendedName>
        <fullName evidence="1">Exodeoxyribonuclease 7 small subunit</fullName>
        <ecNumber evidence="1">3.1.11.6</ecNumber>
    </recommendedName>
    <alternativeName>
        <fullName evidence="1">Exodeoxyribonuclease VII small subunit</fullName>
        <shortName evidence="1">Exonuclease VII small subunit</shortName>
    </alternativeName>
</protein>
<feature type="chain" id="PRO_1000205233" description="Exodeoxyribonuclease 7 small subunit">
    <location>
        <begin position="1"/>
        <end position="80"/>
    </location>
</feature>
<gene>
    <name evidence="1" type="primary">xseB</name>
    <name type="ordered locus">RAF_ORF0442</name>
</gene>
<dbReference type="EC" id="3.1.11.6" evidence="1"/>
<dbReference type="EMBL" id="CP001612">
    <property type="protein sequence ID" value="ACP53374.1"/>
    <property type="molecule type" value="Genomic_DNA"/>
</dbReference>
<dbReference type="RefSeq" id="WP_012719606.1">
    <property type="nucleotide sequence ID" value="NC_012633.1"/>
</dbReference>
<dbReference type="SMR" id="C3PN64"/>
<dbReference type="KEGG" id="raf:RAF_ORF0442"/>
<dbReference type="HOGENOM" id="CLU_145918_0_3_5"/>
<dbReference type="Proteomes" id="UP000002305">
    <property type="component" value="Chromosome"/>
</dbReference>
<dbReference type="GO" id="GO:0005829">
    <property type="term" value="C:cytosol"/>
    <property type="evidence" value="ECO:0007669"/>
    <property type="project" value="TreeGrafter"/>
</dbReference>
<dbReference type="GO" id="GO:0009318">
    <property type="term" value="C:exodeoxyribonuclease VII complex"/>
    <property type="evidence" value="ECO:0007669"/>
    <property type="project" value="InterPro"/>
</dbReference>
<dbReference type="GO" id="GO:0008855">
    <property type="term" value="F:exodeoxyribonuclease VII activity"/>
    <property type="evidence" value="ECO:0007669"/>
    <property type="project" value="UniProtKB-UniRule"/>
</dbReference>
<dbReference type="GO" id="GO:0006308">
    <property type="term" value="P:DNA catabolic process"/>
    <property type="evidence" value="ECO:0007669"/>
    <property type="project" value="UniProtKB-UniRule"/>
</dbReference>
<dbReference type="Gene3D" id="1.10.287.1040">
    <property type="entry name" value="Exonuclease VII, small subunit"/>
    <property type="match status" value="1"/>
</dbReference>
<dbReference type="HAMAP" id="MF_00337">
    <property type="entry name" value="Exonuc_7_S"/>
    <property type="match status" value="1"/>
</dbReference>
<dbReference type="InterPro" id="IPR003761">
    <property type="entry name" value="Exonuc_VII_S"/>
</dbReference>
<dbReference type="InterPro" id="IPR037004">
    <property type="entry name" value="Exonuc_VII_ssu_sf"/>
</dbReference>
<dbReference type="NCBIfam" id="NF002139">
    <property type="entry name" value="PRK00977.1-3"/>
    <property type="match status" value="1"/>
</dbReference>
<dbReference type="NCBIfam" id="NF002140">
    <property type="entry name" value="PRK00977.1-4"/>
    <property type="match status" value="1"/>
</dbReference>
<dbReference type="NCBIfam" id="TIGR01280">
    <property type="entry name" value="xseB"/>
    <property type="match status" value="1"/>
</dbReference>
<dbReference type="PANTHER" id="PTHR34137">
    <property type="entry name" value="EXODEOXYRIBONUCLEASE 7 SMALL SUBUNIT"/>
    <property type="match status" value="1"/>
</dbReference>
<dbReference type="PANTHER" id="PTHR34137:SF1">
    <property type="entry name" value="EXODEOXYRIBONUCLEASE 7 SMALL SUBUNIT"/>
    <property type="match status" value="1"/>
</dbReference>
<dbReference type="Pfam" id="PF02609">
    <property type="entry name" value="Exonuc_VII_S"/>
    <property type="match status" value="1"/>
</dbReference>
<dbReference type="PIRSF" id="PIRSF006488">
    <property type="entry name" value="Exonuc_VII_S"/>
    <property type="match status" value="1"/>
</dbReference>
<dbReference type="SUPFAM" id="SSF116842">
    <property type="entry name" value="XseB-like"/>
    <property type="match status" value="1"/>
</dbReference>
<sequence length="80" mass="9148">MTNTKTLEANISFEEALKELEEIVKKIDKGQESLETAVNSFERGILLKNHCEKKLKEARLKIEKITKLADSTVVLEEMEV</sequence>
<proteinExistence type="inferred from homology"/>
<reference key="1">
    <citation type="journal article" date="2009" name="BMC Genomics">
        <title>Analysis of the Rickettsia africae genome reveals that virulence acquisition in Rickettsia species may be explained by genome reduction.</title>
        <authorList>
            <person name="Fournier P.-E."/>
            <person name="El Karkouri K."/>
            <person name="Leroy Q."/>
            <person name="Robert C."/>
            <person name="Giumelli B."/>
            <person name="Renesto P."/>
            <person name="Socolovschi C."/>
            <person name="Parola P."/>
            <person name="Audic S."/>
            <person name="Raoult D."/>
        </authorList>
    </citation>
    <scope>NUCLEOTIDE SEQUENCE [LARGE SCALE GENOMIC DNA]</scope>
    <source>
        <strain>ESF-5</strain>
    </source>
</reference>
<name>EX7S_RICAE</name>